<protein>
    <recommendedName>
        <fullName evidence="1">Large ribosomal subunit protein bL9</fullName>
    </recommendedName>
    <alternativeName>
        <fullName evidence="2">50S ribosomal protein L9</fullName>
    </alternativeName>
</protein>
<dbReference type="EMBL" id="CP000251">
    <property type="protein sequence ID" value="ABC79893.1"/>
    <property type="molecule type" value="Genomic_DNA"/>
</dbReference>
<dbReference type="RefSeq" id="WP_011419176.1">
    <property type="nucleotide sequence ID" value="NC_007760.1"/>
</dbReference>
<dbReference type="SMR" id="Q2IM65"/>
<dbReference type="STRING" id="290397.Adeh_0116"/>
<dbReference type="KEGG" id="ade:Adeh_0116"/>
<dbReference type="eggNOG" id="COG0359">
    <property type="taxonomic scope" value="Bacteria"/>
</dbReference>
<dbReference type="HOGENOM" id="CLU_078938_3_0_7"/>
<dbReference type="OrthoDB" id="9788336at2"/>
<dbReference type="Proteomes" id="UP000001935">
    <property type="component" value="Chromosome"/>
</dbReference>
<dbReference type="GO" id="GO:1990904">
    <property type="term" value="C:ribonucleoprotein complex"/>
    <property type="evidence" value="ECO:0007669"/>
    <property type="project" value="UniProtKB-KW"/>
</dbReference>
<dbReference type="GO" id="GO:0005840">
    <property type="term" value="C:ribosome"/>
    <property type="evidence" value="ECO:0007669"/>
    <property type="project" value="UniProtKB-KW"/>
</dbReference>
<dbReference type="GO" id="GO:0019843">
    <property type="term" value="F:rRNA binding"/>
    <property type="evidence" value="ECO:0007669"/>
    <property type="project" value="UniProtKB-UniRule"/>
</dbReference>
<dbReference type="GO" id="GO:0003735">
    <property type="term" value="F:structural constituent of ribosome"/>
    <property type="evidence" value="ECO:0007669"/>
    <property type="project" value="InterPro"/>
</dbReference>
<dbReference type="GO" id="GO:0006412">
    <property type="term" value="P:translation"/>
    <property type="evidence" value="ECO:0007669"/>
    <property type="project" value="UniProtKB-UniRule"/>
</dbReference>
<dbReference type="FunFam" id="3.10.430.100:FF:000006">
    <property type="entry name" value="50S ribosomal protein L9"/>
    <property type="match status" value="1"/>
</dbReference>
<dbReference type="FunFam" id="3.40.5.10:FF:000003">
    <property type="entry name" value="50S ribosomal protein L9"/>
    <property type="match status" value="1"/>
</dbReference>
<dbReference type="Gene3D" id="3.10.430.100">
    <property type="entry name" value="Ribosomal protein L9, C-terminal domain"/>
    <property type="match status" value="1"/>
</dbReference>
<dbReference type="Gene3D" id="3.40.5.10">
    <property type="entry name" value="Ribosomal protein L9, N-terminal domain"/>
    <property type="match status" value="1"/>
</dbReference>
<dbReference type="HAMAP" id="MF_00503">
    <property type="entry name" value="Ribosomal_bL9"/>
    <property type="match status" value="1"/>
</dbReference>
<dbReference type="InterPro" id="IPR000244">
    <property type="entry name" value="Ribosomal_bL9"/>
</dbReference>
<dbReference type="InterPro" id="IPR009027">
    <property type="entry name" value="Ribosomal_bL9/RNase_H1_N"/>
</dbReference>
<dbReference type="InterPro" id="IPR020594">
    <property type="entry name" value="Ribosomal_bL9_bac/chp"/>
</dbReference>
<dbReference type="InterPro" id="IPR020069">
    <property type="entry name" value="Ribosomal_bL9_C"/>
</dbReference>
<dbReference type="InterPro" id="IPR036791">
    <property type="entry name" value="Ribosomal_bL9_C_sf"/>
</dbReference>
<dbReference type="InterPro" id="IPR020070">
    <property type="entry name" value="Ribosomal_bL9_N"/>
</dbReference>
<dbReference type="InterPro" id="IPR036935">
    <property type="entry name" value="Ribosomal_bL9_N_sf"/>
</dbReference>
<dbReference type="NCBIfam" id="TIGR00158">
    <property type="entry name" value="L9"/>
    <property type="match status" value="1"/>
</dbReference>
<dbReference type="PANTHER" id="PTHR21368">
    <property type="entry name" value="50S RIBOSOMAL PROTEIN L9"/>
    <property type="match status" value="1"/>
</dbReference>
<dbReference type="Pfam" id="PF03948">
    <property type="entry name" value="Ribosomal_L9_C"/>
    <property type="match status" value="1"/>
</dbReference>
<dbReference type="Pfam" id="PF01281">
    <property type="entry name" value="Ribosomal_L9_N"/>
    <property type="match status" value="1"/>
</dbReference>
<dbReference type="SUPFAM" id="SSF55658">
    <property type="entry name" value="L9 N-domain-like"/>
    <property type="match status" value="1"/>
</dbReference>
<dbReference type="SUPFAM" id="SSF55653">
    <property type="entry name" value="Ribosomal protein L9 C-domain"/>
    <property type="match status" value="1"/>
</dbReference>
<dbReference type="PROSITE" id="PS00651">
    <property type="entry name" value="RIBOSOMAL_L9"/>
    <property type="match status" value="1"/>
</dbReference>
<comment type="function">
    <text evidence="1">Binds to the 23S rRNA.</text>
</comment>
<comment type="similarity">
    <text evidence="1">Belongs to the bacterial ribosomal protein bL9 family.</text>
</comment>
<accession>Q2IM65</accession>
<organism>
    <name type="scientific">Anaeromyxobacter dehalogenans (strain 2CP-C)</name>
    <dbReference type="NCBI Taxonomy" id="290397"/>
    <lineage>
        <taxon>Bacteria</taxon>
        <taxon>Pseudomonadati</taxon>
        <taxon>Myxococcota</taxon>
        <taxon>Myxococcia</taxon>
        <taxon>Myxococcales</taxon>
        <taxon>Cystobacterineae</taxon>
        <taxon>Anaeromyxobacteraceae</taxon>
        <taxon>Anaeromyxobacter</taxon>
    </lineage>
</organism>
<evidence type="ECO:0000255" key="1">
    <source>
        <dbReference type="HAMAP-Rule" id="MF_00503"/>
    </source>
</evidence>
<evidence type="ECO:0000305" key="2"/>
<name>RL9_ANADE</name>
<feature type="chain" id="PRO_0000236470" description="Large ribosomal subunit protein bL9">
    <location>
        <begin position="1"/>
        <end position="149"/>
    </location>
</feature>
<keyword id="KW-1185">Reference proteome</keyword>
<keyword id="KW-0687">Ribonucleoprotein</keyword>
<keyword id="KW-0689">Ribosomal protein</keyword>
<keyword id="KW-0694">RNA-binding</keyword>
<keyword id="KW-0699">rRNA-binding</keyword>
<proteinExistence type="inferred from homology"/>
<reference key="1">
    <citation type="submission" date="2006-01" db="EMBL/GenBank/DDBJ databases">
        <title>Complete sequence of Anaeromyxobacter dehalogenans 2CP-C.</title>
        <authorList>
            <person name="Copeland A."/>
            <person name="Lucas S."/>
            <person name="Lapidus A."/>
            <person name="Barry K."/>
            <person name="Detter J.C."/>
            <person name="Glavina T."/>
            <person name="Hammon N."/>
            <person name="Israni S."/>
            <person name="Pitluck S."/>
            <person name="Brettin T."/>
            <person name="Bruce D."/>
            <person name="Han C."/>
            <person name="Tapia R."/>
            <person name="Gilna P."/>
            <person name="Kiss H."/>
            <person name="Schmutz J."/>
            <person name="Larimer F."/>
            <person name="Land M."/>
            <person name="Kyrpides N."/>
            <person name="Anderson I."/>
            <person name="Sanford R.A."/>
            <person name="Ritalahti K.M."/>
            <person name="Thomas H.S."/>
            <person name="Kirby J.R."/>
            <person name="Zhulin I.B."/>
            <person name="Loeffler F.E."/>
            <person name="Richardson P."/>
        </authorList>
    </citation>
    <scope>NUCLEOTIDE SEQUENCE [LARGE SCALE GENOMIC DNA]</scope>
    <source>
        <strain>2CP-C</strain>
    </source>
</reference>
<gene>
    <name evidence="1" type="primary">rplI</name>
    <name type="ordered locus">Adeh_0116</name>
</gene>
<sequence length="149" mass="15991">MKLILREDVENLGKGGDLVDVKPGYGRNYLLPRGLAVSANPKNVKELEHQKAVAAAKAAKLKASAQAVAKRLSETPVTLKRKVGEQDKLYGSVTALDVAEALAARGVQLDRRSIVLDEPIKTLGEFEVPVKLHSEVAGKVKVTVEAEAE</sequence>